<keyword id="KW-1003">Cell membrane</keyword>
<keyword id="KW-0449">Lipoprotein</keyword>
<keyword id="KW-0472">Membrane</keyword>
<keyword id="KW-0564">Palmitate</keyword>
<keyword id="KW-0732">Signal</keyword>
<name>Y107_CHLMU</name>
<proteinExistence type="inferred from homology"/>
<accession>Q9PLJ2</accession>
<reference key="1">
    <citation type="journal article" date="2000" name="Nucleic Acids Res.">
        <title>Genome sequences of Chlamydia trachomatis MoPn and Chlamydia pneumoniae AR39.</title>
        <authorList>
            <person name="Read T.D."/>
            <person name="Brunham R.C."/>
            <person name="Shen C."/>
            <person name="Gill S.R."/>
            <person name="Heidelberg J.F."/>
            <person name="White O."/>
            <person name="Hickey E.K."/>
            <person name="Peterson J.D."/>
            <person name="Utterback T.R."/>
            <person name="Berry K.J."/>
            <person name="Bass S."/>
            <person name="Linher K.D."/>
            <person name="Weidman J.F."/>
            <person name="Khouri H.M."/>
            <person name="Craven B."/>
            <person name="Bowman C."/>
            <person name="Dodson R.J."/>
            <person name="Gwinn M.L."/>
            <person name="Nelson W.C."/>
            <person name="DeBoy R.T."/>
            <person name="Kolonay J.F."/>
            <person name="McClarty G."/>
            <person name="Salzberg S.L."/>
            <person name="Eisen J.A."/>
            <person name="Fraser C.M."/>
        </authorList>
    </citation>
    <scope>NUCLEOTIDE SEQUENCE [LARGE SCALE GENOMIC DNA]</scope>
    <source>
        <strain>MoPn / Nigg</strain>
    </source>
</reference>
<feature type="signal peptide" evidence="1">
    <location>
        <begin position="1"/>
        <end position="21"/>
    </location>
</feature>
<feature type="chain" id="PRO_0000013757" description="Uncharacterized lipoprotein TC_0107">
    <location>
        <begin position="22"/>
        <end position="218"/>
    </location>
</feature>
<feature type="lipid moiety-binding region" description="N-palmitoyl cysteine" evidence="1">
    <location>
        <position position="22"/>
    </location>
</feature>
<feature type="lipid moiety-binding region" description="S-diacylglycerol cysteine" evidence="1">
    <location>
        <position position="22"/>
    </location>
</feature>
<comment type="subcellular location">
    <subcellularLocation>
        <location evidence="2">Cell membrane</location>
        <topology evidence="2">Lipid-anchor</topology>
    </subcellularLocation>
</comment>
<comment type="similarity">
    <text evidence="2">Belongs to the chlamydial CPn_0875/CT_734/TC_0107 family.</text>
</comment>
<protein>
    <recommendedName>
        <fullName>Uncharacterized lipoprotein TC_0107</fullName>
    </recommendedName>
</protein>
<dbReference type="EMBL" id="AE002160">
    <property type="protein sequence ID" value="AAF38987.1"/>
    <property type="molecule type" value="Genomic_DNA"/>
</dbReference>
<dbReference type="PIR" id="E81740">
    <property type="entry name" value="E81740"/>
</dbReference>
<dbReference type="RefSeq" id="WP_010229389.1">
    <property type="nucleotide sequence ID" value="NZ_CP063055.1"/>
</dbReference>
<dbReference type="GeneID" id="1245637"/>
<dbReference type="KEGG" id="cmu:TC_0107"/>
<dbReference type="HOGENOM" id="CLU_1341277_0_0_0"/>
<dbReference type="OrthoDB" id="19114at2"/>
<dbReference type="Proteomes" id="UP000000800">
    <property type="component" value="Chromosome"/>
</dbReference>
<dbReference type="GO" id="GO:0005886">
    <property type="term" value="C:plasma membrane"/>
    <property type="evidence" value="ECO:0007669"/>
    <property type="project" value="UniProtKB-SubCell"/>
</dbReference>
<dbReference type="PROSITE" id="PS51257">
    <property type="entry name" value="PROKAR_LIPOPROTEIN"/>
    <property type="match status" value="1"/>
</dbReference>
<organism>
    <name type="scientific">Chlamydia muridarum (strain MoPn / Nigg)</name>
    <dbReference type="NCBI Taxonomy" id="243161"/>
    <lineage>
        <taxon>Bacteria</taxon>
        <taxon>Pseudomonadati</taxon>
        <taxon>Chlamydiota</taxon>
        <taxon>Chlamydiia</taxon>
        <taxon>Chlamydiales</taxon>
        <taxon>Chlamydiaceae</taxon>
        <taxon>Chlamydia/Chlamydophila group</taxon>
        <taxon>Chlamydia</taxon>
    </lineage>
</organism>
<gene>
    <name type="ordered locus">TC_0107</name>
</gene>
<evidence type="ECO:0000255" key="1">
    <source>
        <dbReference type="PROSITE-ProRule" id="PRU00303"/>
    </source>
</evidence>
<evidence type="ECO:0000305" key="2"/>
<sequence length="218" mass="23664">MKKFVYKYSFGALLLLSGLSSCCPSSYGSTPAKNTAEIKEESVILREEPESGCKKKSSCCLRKFFSRKKPKEKPEPVLPNFKSYADPMTDAERKDLSFVVSAAAEKSSIALAMAQGEIKGALSRIREIHPLVLLQALAEDPALIAGMKKMQGRDWVWNIFMTELSKAFSQAASLGAFSVADVAAFASTLGLDSGTVTSIVDGERWAELIDVVIQSPTI</sequence>